<feature type="chain" id="PRO_0000214131" description="UDP-2,3-diacylglucosamine hydrolase">
    <location>
        <begin position="1"/>
        <end position="247"/>
    </location>
</feature>
<feature type="binding site" evidence="1">
    <location>
        <position position="8"/>
    </location>
    <ligand>
        <name>Mn(2+)</name>
        <dbReference type="ChEBI" id="CHEBI:29035"/>
        <label>1</label>
    </ligand>
</feature>
<feature type="binding site" evidence="1">
    <location>
        <position position="10"/>
    </location>
    <ligand>
        <name>Mn(2+)</name>
        <dbReference type="ChEBI" id="CHEBI:29035"/>
        <label>1</label>
    </ligand>
</feature>
<feature type="binding site" evidence="1">
    <location>
        <position position="41"/>
    </location>
    <ligand>
        <name>Mn(2+)</name>
        <dbReference type="ChEBI" id="CHEBI:29035"/>
        <label>1</label>
    </ligand>
</feature>
<feature type="binding site" evidence="1">
    <location>
        <position position="41"/>
    </location>
    <ligand>
        <name>Mn(2+)</name>
        <dbReference type="ChEBI" id="CHEBI:29035"/>
        <label>2</label>
    </ligand>
</feature>
<feature type="binding site" evidence="1">
    <location>
        <begin position="79"/>
        <end position="80"/>
    </location>
    <ligand>
        <name>substrate</name>
    </ligand>
</feature>
<feature type="binding site" evidence="1">
    <location>
        <position position="79"/>
    </location>
    <ligand>
        <name>Mn(2+)</name>
        <dbReference type="ChEBI" id="CHEBI:29035"/>
        <label>2</label>
    </ligand>
</feature>
<feature type="binding site" evidence="1">
    <location>
        <position position="114"/>
    </location>
    <ligand>
        <name>Mn(2+)</name>
        <dbReference type="ChEBI" id="CHEBI:29035"/>
        <label>2</label>
    </ligand>
</feature>
<feature type="binding site" evidence="1">
    <location>
        <position position="122"/>
    </location>
    <ligand>
        <name>substrate</name>
    </ligand>
</feature>
<feature type="binding site" evidence="1">
    <location>
        <position position="160"/>
    </location>
    <ligand>
        <name>substrate</name>
    </ligand>
</feature>
<feature type="binding site" evidence="1">
    <location>
        <position position="171"/>
    </location>
    <ligand>
        <name>substrate</name>
    </ligand>
</feature>
<feature type="binding site" evidence="1">
    <location>
        <position position="174"/>
    </location>
    <ligand>
        <name>substrate</name>
    </ligand>
</feature>
<feature type="binding site" evidence="1">
    <location>
        <position position="202"/>
    </location>
    <ligand>
        <name>Mn(2+)</name>
        <dbReference type="ChEBI" id="CHEBI:29035"/>
        <label>2</label>
    </ligand>
</feature>
<feature type="binding site" evidence="1">
    <location>
        <position position="202"/>
    </location>
    <ligand>
        <name>substrate</name>
    </ligand>
</feature>
<feature type="binding site" evidence="1">
    <location>
        <position position="204"/>
    </location>
    <ligand>
        <name>Mn(2+)</name>
        <dbReference type="ChEBI" id="CHEBI:29035"/>
        <label>1</label>
    </ligand>
</feature>
<organism>
    <name type="scientific">Xanthomonas campestris pv. campestris (strain ATCC 33913 / DSM 3586 / NCPPB 528 / LMG 568 / P 25)</name>
    <dbReference type="NCBI Taxonomy" id="190485"/>
    <lineage>
        <taxon>Bacteria</taxon>
        <taxon>Pseudomonadati</taxon>
        <taxon>Pseudomonadota</taxon>
        <taxon>Gammaproteobacteria</taxon>
        <taxon>Lysobacterales</taxon>
        <taxon>Lysobacteraceae</taxon>
        <taxon>Xanthomonas</taxon>
    </lineage>
</organism>
<keyword id="KW-0997">Cell inner membrane</keyword>
<keyword id="KW-1003">Cell membrane</keyword>
<keyword id="KW-0378">Hydrolase</keyword>
<keyword id="KW-0441">Lipid A biosynthesis</keyword>
<keyword id="KW-0444">Lipid biosynthesis</keyword>
<keyword id="KW-0443">Lipid metabolism</keyword>
<keyword id="KW-0464">Manganese</keyword>
<keyword id="KW-0472">Membrane</keyword>
<keyword id="KW-0479">Metal-binding</keyword>
<keyword id="KW-1185">Reference proteome</keyword>
<reference key="1">
    <citation type="journal article" date="2002" name="Nature">
        <title>Comparison of the genomes of two Xanthomonas pathogens with differing host specificities.</title>
        <authorList>
            <person name="da Silva A.C.R."/>
            <person name="Ferro J.A."/>
            <person name="Reinach F.C."/>
            <person name="Farah C.S."/>
            <person name="Furlan L.R."/>
            <person name="Quaggio R.B."/>
            <person name="Monteiro-Vitorello C.B."/>
            <person name="Van Sluys M.A."/>
            <person name="Almeida N.F. Jr."/>
            <person name="Alves L.M.C."/>
            <person name="do Amaral A.M."/>
            <person name="Bertolini M.C."/>
            <person name="Camargo L.E.A."/>
            <person name="Camarotte G."/>
            <person name="Cannavan F."/>
            <person name="Cardozo J."/>
            <person name="Chambergo F."/>
            <person name="Ciapina L.P."/>
            <person name="Cicarelli R.M.B."/>
            <person name="Coutinho L.L."/>
            <person name="Cursino-Santos J.R."/>
            <person name="El-Dorry H."/>
            <person name="Faria J.B."/>
            <person name="Ferreira A.J.S."/>
            <person name="Ferreira R.C.C."/>
            <person name="Ferro M.I.T."/>
            <person name="Formighieri E.F."/>
            <person name="Franco M.C."/>
            <person name="Greggio C.C."/>
            <person name="Gruber A."/>
            <person name="Katsuyama A.M."/>
            <person name="Kishi L.T."/>
            <person name="Leite R.P."/>
            <person name="Lemos E.G.M."/>
            <person name="Lemos M.V.F."/>
            <person name="Locali E.C."/>
            <person name="Machado M.A."/>
            <person name="Madeira A.M.B.N."/>
            <person name="Martinez-Rossi N.M."/>
            <person name="Martins E.C."/>
            <person name="Meidanis J."/>
            <person name="Menck C.F.M."/>
            <person name="Miyaki C.Y."/>
            <person name="Moon D.H."/>
            <person name="Moreira L.M."/>
            <person name="Novo M.T.M."/>
            <person name="Okura V.K."/>
            <person name="Oliveira M.C."/>
            <person name="Oliveira V.R."/>
            <person name="Pereira H.A."/>
            <person name="Rossi A."/>
            <person name="Sena J.A.D."/>
            <person name="Silva C."/>
            <person name="de Souza R.F."/>
            <person name="Spinola L.A.F."/>
            <person name="Takita M.A."/>
            <person name="Tamura R.E."/>
            <person name="Teixeira E.C."/>
            <person name="Tezza R.I.D."/>
            <person name="Trindade dos Santos M."/>
            <person name="Truffi D."/>
            <person name="Tsai S.M."/>
            <person name="White F.F."/>
            <person name="Setubal J.C."/>
            <person name="Kitajima J.P."/>
        </authorList>
    </citation>
    <scope>NUCLEOTIDE SEQUENCE [LARGE SCALE GENOMIC DNA]</scope>
    <source>
        <strain>ATCC 33913 / DSM 3586 / NCPPB 528 / LMG 568 / P 25</strain>
    </source>
</reference>
<sequence length="247" mass="26864">MTTLFISDLHLDPARPAITELFLDFLRTQVPGSDALYILGDLFEAWIGDDTPSTAADAVAEALHAVATTGVPVFFMPGNRDFLVGAAYAQRAGFRILPDPTVIDLYGQPTLLMHGDLLCTDDTAYQAFRAQTRDPAFQAQFLSQPLAARVAFAQQARAASHARQSELKQGDQAQFETVTDVAPAEVDATFVRYGLDRIIHGHTHRPAIHTVQAGGRTCTRVVLGDWYEQGSVLRVDADGLALEQLAL</sequence>
<name>LPXH_XANCP</name>
<comment type="function">
    <text evidence="1">Hydrolyzes the pyrophosphate bond of UDP-2,3-diacylglucosamine to yield 2,3-diacylglucosamine 1-phosphate (lipid X) and UMP by catalyzing the attack of water at the alpha-P atom. Involved in the biosynthesis of lipid A, a phosphorylated glycolipid that anchors the lipopolysaccharide to the outer membrane of the cell.</text>
</comment>
<comment type="catalytic activity">
    <reaction evidence="1">
        <text>UDP-2-N,3-O-bis[(3R)-3-hydroxytetradecanoyl]-alpha-D-glucosamine + H2O = 2-N,3-O-bis[(3R)-3-hydroxytetradecanoyl]-alpha-D-glucosaminyl 1-phosphate + UMP + 2 H(+)</text>
        <dbReference type="Rhea" id="RHEA:25213"/>
        <dbReference type="ChEBI" id="CHEBI:15377"/>
        <dbReference type="ChEBI" id="CHEBI:15378"/>
        <dbReference type="ChEBI" id="CHEBI:57865"/>
        <dbReference type="ChEBI" id="CHEBI:57957"/>
        <dbReference type="ChEBI" id="CHEBI:78847"/>
        <dbReference type="EC" id="3.6.1.54"/>
    </reaction>
</comment>
<comment type="cofactor">
    <cofactor evidence="1">
        <name>Mn(2+)</name>
        <dbReference type="ChEBI" id="CHEBI:29035"/>
    </cofactor>
    <text evidence="1">Binds 2 Mn(2+) ions per subunit in a binuclear metal center.</text>
</comment>
<comment type="pathway">
    <text evidence="1">Glycolipid biosynthesis; lipid IV(A) biosynthesis; lipid IV(A) from (3R)-3-hydroxytetradecanoyl-[acyl-carrier-protein] and UDP-N-acetyl-alpha-D-glucosamine: step 4/6.</text>
</comment>
<comment type="subcellular location">
    <subcellularLocation>
        <location evidence="1">Cell inner membrane</location>
        <topology evidence="1">Peripheral membrane protein</topology>
        <orientation evidence="1">Cytoplasmic side</orientation>
    </subcellularLocation>
</comment>
<comment type="similarity">
    <text evidence="1">Belongs to the LpxH family.</text>
</comment>
<gene>
    <name evidence="1" type="primary">lpxH</name>
    <name type="ordered locus">XCC0957</name>
</gene>
<accession>P58976</accession>
<protein>
    <recommendedName>
        <fullName evidence="1">UDP-2,3-diacylglucosamine hydrolase</fullName>
        <ecNumber evidence="1">3.6.1.54</ecNumber>
    </recommendedName>
    <alternativeName>
        <fullName evidence="1">UDP-2,3-diacylglucosamine diphosphatase</fullName>
    </alternativeName>
</protein>
<dbReference type="EC" id="3.6.1.54" evidence="1"/>
<dbReference type="EMBL" id="AE008922">
    <property type="protein sequence ID" value="AAM40267.1"/>
    <property type="molecule type" value="Genomic_DNA"/>
</dbReference>
<dbReference type="RefSeq" id="NP_636343.1">
    <property type="nucleotide sequence ID" value="NC_003902.1"/>
</dbReference>
<dbReference type="RefSeq" id="WP_011036171.1">
    <property type="nucleotide sequence ID" value="NC_003902.1"/>
</dbReference>
<dbReference type="SMR" id="P58976"/>
<dbReference type="STRING" id="190485.XCC0957"/>
<dbReference type="EnsemblBacteria" id="AAM40267">
    <property type="protein sequence ID" value="AAM40267"/>
    <property type="gene ID" value="XCC0957"/>
</dbReference>
<dbReference type="KEGG" id="xcc:XCC0957"/>
<dbReference type="PATRIC" id="fig|190485.4.peg.1031"/>
<dbReference type="eggNOG" id="COG2908">
    <property type="taxonomic scope" value="Bacteria"/>
</dbReference>
<dbReference type="HOGENOM" id="CLU_074586_0_0_6"/>
<dbReference type="OrthoDB" id="9783283at2"/>
<dbReference type="UniPathway" id="UPA00359">
    <property type="reaction ID" value="UER00480"/>
</dbReference>
<dbReference type="Proteomes" id="UP000001010">
    <property type="component" value="Chromosome"/>
</dbReference>
<dbReference type="GO" id="GO:0005737">
    <property type="term" value="C:cytoplasm"/>
    <property type="evidence" value="ECO:0007669"/>
    <property type="project" value="InterPro"/>
</dbReference>
<dbReference type="GO" id="GO:0019897">
    <property type="term" value="C:extrinsic component of plasma membrane"/>
    <property type="evidence" value="ECO:0007669"/>
    <property type="project" value="UniProtKB-UniRule"/>
</dbReference>
<dbReference type="GO" id="GO:0030145">
    <property type="term" value="F:manganese ion binding"/>
    <property type="evidence" value="ECO:0007669"/>
    <property type="project" value="UniProtKB-UniRule"/>
</dbReference>
<dbReference type="GO" id="GO:0008758">
    <property type="term" value="F:UDP-2,3-diacylglucosamine hydrolase activity"/>
    <property type="evidence" value="ECO:0000318"/>
    <property type="project" value="GO_Central"/>
</dbReference>
<dbReference type="GO" id="GO:0009245">
    <property type="term" value="P:lipid A biosynthetic process"/>
    <property type="evidence" value="ECO:0000318"/>
    <property type="project" value="GO_Central"/>
</dbReference>
<dbReference type="CDD" id="cd07398">
    <property type="entry name" value="MPP_YbbF-LpxH"/>
    <property type="match status" value="1"/>
</dbReference>
<dbReference type="Gene3D" id="3.60.21.10">
    <property type="match status" value="1"/>
</dbReference>
<dbReference type="HAMAP" id="MF_00575">
    <property type="entry name" value="LpxH"/>
    <property type="match status" value="1"/>
</dbReference>
<dbReference type="InterPro" id="IPR004843">
    <property type="entry name" value="Calcineurin-like_PHP_ApaH"/>
</dbReference>
<dbReference type="InterPro" id="IPR043461">
    <property type="entry name" value="LpxH-like"/>
</dbReference>
<dbReference type="InterPro" id="IPR029052">
    <property type="entry name" value="Metallo-depent_PP-like"/>
</dbReference>
<dbReference type="InterPro" id="IPR010138">
    <property type="entry name" value="UDP-diacylglucosamine_Hdrlase"/>
</dbReference>
<dbReference type="NCBIfam" id="TIGR01854">
    <property type="entry name" value="lipid_A_lpxH"/>
    <property type="match status" value="1"/>
</dbReference>
<dbReference type="NCBIfam" id="NF003743">
    <property type="entry name" value="PRK05340.1"/>
    <property type="match status" value="1"/>
</dbReference>
<dbReference type="PANTHER" id="PTHR34990:SF1">
    <property type="entry name" value="UDP-2,3-DIACYLGLUCOSAMINE HYDROLASE"/>
    <property type="match status" value="1"/>
</dbReference>
<dbReference type="PANTHER" id="PTHR34990">
    <property type="entry name" value="UDP-2,3-DIACYLGLUCOSAMINE HYDROLASE-RELATED"/>
    <property type="match status" value="1"/>
</dbReference>
<dbReference type="Pfam" id="PF00149">
    <property type="entry name" value="Metallophos"/>
    <property type="match status" value="1"/>
</dbReference>
<dbReference type="SUPFAM" id="SSF56300">
    <property type="entry name" value="Metallo-dependent phosphatases"/>
    <property type="match status" value="1"/>
</dbReference>
<evidence type="ECO:0000255" key="1">
    <source>
        <dbReference type="HAMAP-Rule" id="MF_00575"/>
    </source>
</evidence>
<proteinExistence type="inferred from homology"/>